<evidence type="ECO:0000255" key="1">
    <source>
        <dbReference type="HAMAP-Rule" id="MF_01849"/>
    </source>
</evidence>
<evidence type="ECO:0000255" key="2">
    <source>
        <dbReference type="PROSITE-ProRule" id="PRU01266"/>
    </source>
</evidence>
<accession>A5CX33</accession>
<organism>
    <name type="scientific">Vesicomyosocius okutanii subsp. Calyptogena okutanii (strain HA)</name>
    <dbReference type="NCBI Taxonomy" id="412965"/>
    <lineage>
        <taxon>Bacteria</taxon>
        <taxon>Pseudomonadati</taxon>
        <taxon>Pseudomonadota</taxon>
        <taxon>Gammaproteobacteria</taxon>
        <taxon>Candidatus Pseudothioglobaceae</taxon>
        <taxon>Candidatus Vesicomyosocius</taxon>
    </lineage>
</organism>
<keyword id="KW-0004">4Fe-4S</keyword>
<keyword id="KW-0963">Cytoplasm</keyword>
<keyword id="KW-1015">Disulfide bond</keyword>
<keyword id="KW-0408">Iron</keyword>
<keyword id="KW-0411">Iron-sulfur</keyword>
<keyword id="KW-0479">Metal-binding</keyword>
<keyword id="KW-0489">Methyltransferase</keyword>
<keyword id="KW-1185">Reference proteome</keyword>
<keyword id="KW-0698">rRNA processing</keyword>
<keyword id="KW-0949">S-adenosyl-L-methionine</keyword>
<keyword id="KW-0808">Transferase</keyword>
<keyword id="KW-0819">tRNA processing</keyword>
<dbReference type="EC" id="2.1.1.192" evidence="1"/>
<dbReference type="EMBL" id="AP009247">
    <property type="protein sequence ID" value="BAF61481.1"/>
    <property type="molecule type" value="Genomic_DNA"/>
</dbReference>
<dbReference type="RefSeq" id="WP_011929751.1">
    <property type="nucleotide sequence ID" value="NC_009465.1"/>
</dbReference>
<dbReference type="SMR" id="A5CX33"/>
<dbReference type="STRING" id="412965.COSY_0356"/>
<dbReference type="KEGG" id="vok:COSY_0356"/>
<dbReference type="eggNOG" id="COG0820">
    <property type="taxonomic scope" value="Bacteria"/>
</dbReference>
<dbReference type="HOGENOM" id="CLU_029101_0_0_6"/>
<dbReference type="OrthoDB" id="9793973at2"/>
<dbReference type="Proteomes" id="UP000000247">
    <property type="component" value="Chromosome"/>
</dbReference>
<dbReference type="GO" id="GO:0005737">
    <property type="term" value="C:cytoplasm"/>
    <property type="evidence" value="ECO:0007669"/>
    <property type="project" value="UniProtKB-SubCell"/>
</dbReference>
<dbReference type="GO" id="GO:0051539">
    <property type="term" value="F:4 iron, 4 sulfur cluster binding"/>
    <property type="evidence" value="ECO:0007669"/>
    <property type="project" value="UniProtKB-UniRule"/>
</dbReference>
<dbReference type="GO" id="GO:0046872">
    <property type="term" value="F:metal ion binding"/>
    <property type="evidence" value="ECO:0007669"/>
    <property type="project" value="UniProtKB-KW"/>
</dbReference>
<dbReference type="GO" id="GO:0070040">
    <property type="term" value="F:rRNA (adenine(2503)-C2-)-methyltransferase activity"/>
    <property type="evidence" value="ECO:0007669"/>
    <property type="project" value="UniProtKB-UniRule"/>
</dbReference>
<dbReference type="GO" id="GO:0019843">
    <property type="term" value="F:rRNA binding"/>
    <property type="evidence" value="ECO:0007669"/>
    <property type="project" value="UniProtKB-UniRule"/>
</dbReference>
<dbReference type="GO" id="GO:0002935">
    <property type="term" value="F:tRNA (adenine(37)-C2)-methyltransferase activity"/>
    <property type="evidence" value="ECO:0007669"/>
    <property type="project" value="UniProtKB-UniRule"/>
</dbReference>
<dbReference type="GO" id="GO:0000049">
    <property type="term" value="F:tRNA binding"/>
    <property type="evidence" value="ECO:0007669"/>
    <property type="project" value="UniProtKB-UniRule"/>
</dbReference>
<dbReference type="GO" id="GO:0070475">
    <property type="term" value="P:rRNA base methylation"/>
    <property type="evidence" value="ECO:0007669"/>
    <property type="project" value="UniProtKB-UniRule"/>
</dbReference>
<dbReference type="GO" id="GO:0030488">
    <property type="term" value="P:tRNA methylation"/>
    <property type="evidence" value="ECO:0007669"/>
    <property type="project" value="UniProtKB-UniRule"/>
</dbReference>
<dbReference type="CDD" id="cd01335">
    <property type="entry name" value="Radical_SAM"/>
    <property type="match status" value="1"/>
</dbReference>
<dbReference type="FunFam" id="3.20.20.70:FF:000008">
    <property type="entry name" value="Dual-specificity RNA methyltransferase RlmN"/>
    <property type="match status" value="1"/>
</dbReference>
<dbReference type="Gene3D" id="1.10.150.530">
    <property type="match status" value="1"/>
</dbReference>
<dbReference type="Gene3D" id="3.20.20.70">
    <property type="entry name" value="Aldolase class I"/>
    <property type="match status" value="1"/>
</dbReference>
<dbReference type="HAMAP" id="MF_01849">
    <property type="entry name" value="RNA_methyltr_RlmN"/>
    <property type="match status" value="1"/>
</dbReference>
<dbReference type="InterPro" id="IPR013785">
    <property type="entry name" value="Aldolase_TIM"/>
</dbReference>
<dbReference type="InterPro" id="IPR040072">
    <property type="entry name" value="Methyltransferase_A"/>
</dbReference>
<dbReference type="InterPro" id="IPR048641">
    <property type="entry name" value="RlmN_N"/>
</dbReference>
<dbReference type="InterPro" id="IPR027492">
    <property type="entry name" value="RNA_MTrfase_RlmN"/>
</dbReference>
<dbReference type="InterPro" id="IPR004383">
    <property type="entry name" value="rRNA_lsu_MTrfase_RlmN/Cfr"/>
</dbReference>
<dbReference type="InterPro" id="IPR007197">
    <property type="entry name" value="rSAM"/>
</dbReference>
<dbReference type="NCBIfam" id="TIGR00048">
    <property type="entry name" value="rRNA_mod_RlmN"/>
    <property type="match status" value="1"/>
</dbReference>
<dbReference type="PANTHER" id="PTHR30544">
    <property type="entry name" value="23S RRNA METHYLTRANSFERASE"/>
    <property type="match status" value="1"/>
</dbReference>
<dbReference type="PANTHER" id="PTHR30544:SF5">
    <property type="entry name" value="RADICAL SAM CORE DOMAIN-CONTAINING PROTEIN"/>
    <property type="match status" value="1"/>
</dbReference>
<dbReference type="Pfam" id="PF04055">
    <property type="entry name" value="Radical_SAM"/>
    <property type="match status" value="1"/>
</dbReference>
<dbReference type="Pfam" id="PF21016">
    <property type="entry name" value="RlmN_N"/>
    <property type="match status" value="1"/>
</dbReference>
<dbReference type="PIRSF" id="PIRSF006004">
    <property type="entry name" value="CHP00048"/>
    <property type="match status" value="1"/>
</dbReference>
<dbReference type="SFLD" id="SFLDF00275">
    <property type="entry name" value="adenosine_C2_methyltransferase"/>
    <property type="match status" value="1"/>
</dbReference>
<dbReference type="SFLD" id="SFLDG01062">
    <property type="entry name" value="methyltransferase_(Class_A)"/>
    <property type="match status" value="1"/>
</dbReference>
<dbReference type="SUPFAM" id="SSF102114">
    <property type="entry name" value="Radical SAM enzymes"/>
    <property type="match status" value="1"/>
</dbReference>
<dbReference type="PROSITE" id="PS51918">
    <property type="entry name" value="RADICAL_SAM"/>
    <property type="match status" value="1"/>
</dbReference>
<reference key="1">
    <citation type="journal article" date="2007" name="Curr. Biol.">
        <title>Reduced genome of the thioautotrophic intracellular symbiont in a deep-sea clam, Calyptogena okutanii.</title>
        <authorList>
            <person name="Kuwahara H."/>
            <person name="Yoshida T."/>
            <person name="Takaki Y."/>
            <person name="Shimamura S."/>
            <person name="Nishi S."/>
            <person name="Harada M."/>
            <person name="Matsuyama K."/>
            <person name="Takishita K."/>
            <person name="Kawato M."/>
            <person name="Uematsu K."/>
            <person name="Fujiwara Y."/>
            <person name="Sato T."/>
            <person name="Kato C."/>
            <person name="Kitagawa M."/>
            <person name="Kato I."/>
            <person name="Maruyama T."/>
        </authorList>
    </citation>
    <scope>NUCLEOTIDE SEQUENCE [LARGE SCALE GENOMIC DNA]</scope>
    <source>
        <strain>HA</strain>
    </source>
</reference>
<feature type="chain" id="PRO_0000350514" description="Dual-specificity RNA methyltransferase RlmN">
    <location>
        <begin position="1"/>
        <end position="356"/>
    </location>
</feature>
<feature type="domain" description="Radical SAM core" evidence="2">
    <location>
        <begin position="98"/>
        <end position="334"/>
    </location>
</feature>
<feature type="active site" description="Proton acceptor" evidence="1">
    <location>
        <position position="92"/>
    </location>
</feature>
<feature type="active site" description="S-methylcysteine intermediate" evidence="1">
    <location>
        <position position="337"/>
    </location>
</feature>
<feature type="binding site" evidence="1">
    <location>
        <position position="112"/>
    </location>
    <ligand>
        <name>[4Fe-4S] cluster</name>
        <dbReference type="ChEBI" id="CHEBI:49883"/>
        <note>4Fe-4S-S-AdoMet</note>
    </ligand>
</feature>
<feature type="binding site" evidence="1">
    <location>
        <position position="116"/>
    </location>
    <ligand>
        <name>[4Fe-4S] cluster</name>
        <dbReference type="ChEBI" id="CHEBI:49883"/>
        <note>4Fe-4S-S-AdoMet</note>
    </ligand>
</feature>
<feature type="binding site" evidence="1">
    <location>
        <position position="119"/>
    </location>
    <ligand>
        <name>[4Fe-4S] cluster</name>
        <dbReference type="ChEBI" id="CHEBI:49883"/>
        <note>4Fe-4S-S-AdoMet</note>
    </ligand>
</feature>
<feature type="binding site" evidence="1">
    <location>
        <begin position="162"/>
        <end position="163"/>
    </location>
    <ligand>
        <name>S-adenosyl-L-methionine</name>
        <dbReference type="ChEBI" id="CHEBI:59789"/>
    </ligand>
</feature>
<feature type="binding site" evidence="1">
    <location>
        <position position="194"/>
    </location>
    <ligand>
        <name>S-adenosyl-L-methionine</name>
        <dbReference type="ChEBI" id="CHEBI:59789"/>
    </ligand>
</feature>
<feature type="binding site" evidence="1">
    <location>
        <begin position="216"/>
        <end position="218"/>
    </location>
    <ligand>
        <name>S-adenosyl-L-methionine</name>
        <dbReference type="ChEBI" id="CHEBI:59789"/>
    </ligand>
</feature>
<feature type="binding site" evidence="1">
    <location>
        <position position="294"/>
    </location>
    <ligand>
        <name>S-adenosyl-L-methionine</name>
        <dbReference type="ChEBI" id="CHEBI:59789"/>
    </ligand>
</feature>
<feature type="disulfide bond" description="(transient)" evidence="1">
    <location>
        <begin position="105"/>
        <end position="337"/>
    </location>
</feature>
<name>RLMN_VESOH</name>
<protein>
    <recommendedName>
        <fullName evidence="1">Dual-specificity RNA methyltransferase RlmN</fullName>
        <ecNumber evidence="1">2.1.1.192</ecNumber>
    </recommendedName>
    <alternativeName>
        <fullName evidence="1">23S rRNA (adenine(2503)-C(2))-methyltransferase</fullName>
    </alternativeName>
    <alternativeName>
        <fullName evidence="1">23S rRNA m2A2503 methyltransferase</fullName>
    </alternativeName>
    <alternativeName>
        <fullName evidence="1">Ribosomal RNA large subunit methyltransferase N</fullName>
    </alternativeName>
    <alternativeName>
        <fullName evidence="1">tRNA (adenine(37)-C(2))-methyltransferase</fullName>
    </alternativeName>
    <alternativeName>
        <fullName evidence="1">tRNA m2A37 methyltransferase</fullName>
    </alternativeName>
</protein>
<gene>
    <name evidence="1" type="primary">rlmN</name>
    <name type="ordered locus">COSY_0356</name>
</gene>
<comment type="function">
    <text evidence="1">Specifically methylates position 2 of adenine 2503 in 23S rRNA and position 2 of adenine 37 in tRNAs. m2A2503 modification seems to play a crucial role in the proofreading step occurring at the peptidyl transferase center and thus would serve to optimize ribosomal fidelity.</text>
</comment>
<comment type="catalytic activity">
    <reaction evidence="1">
        <text>adenosine(2503) in 23S rRNA + 2 reduced [2Fe-2S]-[ferredoxin] + 2 S-adenosyl-L-methionine = 2-methyladenosine(2503) in 23S rRNA + 5'-deoxyadenosine + L-methionine + 2 oxidized [2Fe-2S]-[ferredoxin] + S-adenosyl-L-homocysteine</text>
        <dbReference type="Rhea" id="RHEA:42916"/>
        <dbReference type="Rhea" id="RHEA-COMP:10000"/>
        <dbReference type="Rhea" id="RHEA-COMP:10001"/>
        <dbReference type="Rhea" id="RHEA-COMP:10152"/>
        <dbReference type="Rhea" id="RHEA-COMP:10282"/>
        <dbReference type="ChEBI" id="CHEBI:17319"/>
        <dbReference type="ChEBI" id="CHEBI:33737"/>
        <dbReference type="ChEBI" id="CHEBI:33738"/>
        <dbReference type="ChEBI" id="CHEBI:57844"/>
        <dbReference type="ChEBI" id="CHEBI:57856"/>
        <dbReference type="ChEBI" id="CHEBI:59789"/>
        <dbReference type="ChEBI" id="CHEBI:74411"/>
        <dbReference type="ChEBI" id="CHEBI:74497"/>
        <dbReference type="EC" id="2.1.1.192"/>
    </reaction>
</comment>
<comment type="catalytic activity">
    <reaction evidence="1">
        <text>adenosine(37) in tRNA + 2 reduced [2Fe-2S]-[ferredoxin] + 2 S-adenosyl-L-methionine = 2-methyladenosine(37) in tRNA + 5'-deoxyadenosine + L-methionine + 2 oxidized [2Fe-2S]-[ferredoxin] + S-adenosyl-L-homocysteine</text>
        <dbReference type="Rhea" id="RHEA:43332"/>
        <dbReference type="Rhea" id="RHEA-COMP:10000"/>
        <dbReference type="Rhea" id="RHEA-COMP:10001"/>
        <dbReference type="Rhea" id="RHEA-COMP:10162"/>
        <dbReference type="Rhea" id="RHEA-COMP:10485"/>
        <dbReference type="ChEBI" id="CHEBI:17319"/>
        <dbReference type="ChEBI" id="CHEBI:33737"/>
        <dbReference type="ChEBI" id="CHEBI:33738"/>
        <dbReference type="ChEBI" id="CHEBI:57844"/>
        <dbReference type="ChEBI" id="CHEBI:57856"/>
        <dbReference type="ChEBI" id="CHEBI:59789"/>
        <dbReference type="ChEBI" id="CHEBI:74411"/>
        <dbReference type="ChEBI" id="CHEBI:74497"/>
        <dbReference type="EC" id="2.1.1.192"/>
    </reaction>
</comment>
<comment type="cofactor">
    <cofactor evidence="1">
        <name>[4Fe-4S] cluster</name>
        <dbReference type="ChEBI" id="CHEBI:49883"/>
    </cofactor>
    <text evidence="1">Binds 1 [4Fe-4S] cluster. The cluster is coordinated with 3 cysteines and an exchangeable S-adenosyl-L-methionine.</text>
</comment>
<comment type="subcellular location">
    <subcellularLocation>
        <location evidence="1">Cytoplasm</location>
    </subcellularLocation>
</comment>
<comment type="miscellaneous">
    <text evidence="1">Reaction proceeds by a ping-pong mechanism involving intermediate methylation of a conserved cysteine residue.</text>
</comment>
<comment type="similarity">
    <text evidence="1">Belongs to the radical SAM superfamily. RlmN family.</text>
</comment>
<proteinExistence type="inferred from homology"/>
<sequence length="356" mass="40583">MNKQNLLSLNQDALNDFFVCLGEKHYRTKQIMQWIYKVHEFDFDKMFNFSKSLREELNKIACIEFPKVVKQKFALDKVIKWVLALSEDNYIEMVYIPEKDRGTLCISSQVGCALACTFCSTGMQGFNKNLTTAEIIAQVLIANKYLNSKTKRISNIVFMGMGEPLLNEQAVYNACDLLLDDLAFGLSRRKVTISTSGIVPSILRMSKRTPVSLAISLHAPNNQLRDKLVPVNQKYSIEELLKACKVYLNAGTQERHILFEYVMLKDVNDSTEHANKLAKLLKAISAKVNLIPFNSFERTQYQSSNAQTIEKFQDILYQQGIRTMMRRTRGEDIDGACGQLAGKVLNKTKKLNARKH</sequence>